<dbReference type="EMBL" id="DQ012060">
    <property type="protein sequence ID" value="AAY59792.1"/>
    <property type="molecule type" value="mRNA"/>
</dbReference>
<dbReference type="EMBL" id="AM410119">
    <property type="protein sequence ID" value="CAL68934.1"/>
    <property type="molecule type" value="Genomic_DNA"/>
</dbReference>
<dbReference type="EMBL" id="AY831742">
    <property type="protein sequence ID" value="AAW32923.1"/>
    <property type="molecule type" value="Genomic_DNA"/>
</dbReference>
<dbReference type="RefSeq" id="NP_001123229.1">
    <property type="nucleotide sequence ID" value="NM_001129757.1"/>
</dbReference>
<dbReference type="FunCoup" id="Q5IAA9">
    <property type="interactions" value="1"/>
</dbReference>
<dbReference type="STRING" id="9598.ENSPTRP00000034191"/>
<dbReference type="PaxDb" id="9598-ENSPTRP00000055816"/>
<dbReference type="Ensembl" id="ENSPTRT00000036997.5">
    <property type="protein sequence ID" value="ENSPTRP00000034191.5"/>
    <property type="gene ID" value="ENSPTRG00000019959.5"/>
</dbReference>
<dbReference type="GeneID" id="100170022"/>
<dbReference type="KEGG" id="ptr:100170022"/>
<dbReference type="CTD" id="245910"/>
<dbReference type="eggNOG" id="ENOG502TF47">
    <property type="taxonomic scope" value="Eukaryota"/>
</dbReference>
<dbReference type="GeneTree" id="ENSGT00390000013953"/>
<dbReference type="HOGENOM" id="CLU_2757177_0_0_1"/>
<dbReference type="InParanoid" id="Q5IAA9"/>
<dbReference type="OMA" id="MPGAMRI"/>
<dbReference type="OrthoDB" id="14759at9604"/>
<dbReference type="Proteomes" id="UP000002277">
    <property type="component" value="Unplaced"/>
</dbReference>
<dbReference type="Bgee" id="ENSPTRG00000019959">
    <property type="expression patterns" value="Expressed in prefrontal cortex and 1 other cell type or tissue"/>
</dbReference>
<dbReference type="GO" id="GO:0005576">
    <property type="term" value="C:extracellular region"/>
    <property type="evidence" value="ECO:0007669"/>
    <property type="project" value="UniProtKB-SubCell"/>
</dbReference>
<dbReference type="GO" id="GO:0042742">
    <property type="term" value="P:defense response to bacterium"/>
    <property type="evidence" value="ECO:0007669"/>
    <property type="project" value="UniProtKB-KW"/>
</dbReference>
<dbReference type="GO" id="GO:0045087">
    <property type="term" value="P:innate immune response"/>
    <property type="evidence" value="ECO:0007669"/>
    <property type="project" value="InterPro"/>
</dbReference>
<dbReference type="InterPro" id="IPR025933">
    <property type="entry name" value="Beta_defensin_dom"/>
</dbReference>
<dbReference type="Pfam" id="PF13841">
    <property type="entry name" value="Defensin_beta_2"/>
    <property type="match status" value="1"/>
</dbReference>
<protein>
    <recommendedName>
        <fullName>Beta-defensin 107A</fullName>
    </recommendedName>
    <alternativeName>
        <fullName>Beta-defensin 7</fullName>
        <shortName>BD-7</shortName>
        <shortName>DEFB-7</shortName>
        <shortName>cBD-7</shortName>
    </alternativeName>
    <alternativeName>
        <fullName>Defensin, beta 107</fullName>
    </alternativeName>
    <alternativeName>
        <fullName>Defensin, beta 107A</fullName>
    </alternativeName>
</protein>
<name>D107A_PANTR</name>
<sequence>MPGAMKIFFFIFAALILLAQIFQARTAIHRALISKRMEGHCEAECLTFEVKTGGCRAELAPFCCKNRKKH</sequence>
<feature type="signal peptide" evidence="2">
    <location>
        <begin position="1"/>
        <end position="26"/>
    </location>
</feature>
<feature type="peptide" id="PRO_0000006980" description="Beta-defensin 107A">
    <location>
        <begin position="27"/>
        <end position="70"/>
    </location>
</feature>
<feature type="disulfide bond" evidence="1">
    <location>
        <begin position="41"/>
        <end position="55"/>
    </location>
</feature>
<feature type="disulfide bond" evidence="1">
    <location>
        <begin position="45"/>
        <end position="64"/>
    </location>
</feature>
<feature type="sequence conflict" description="In Ref. 3; AAW32923." evidence="3" ref="3">
    <location>
        <begin position="24"/>
        <end position="26"/>
    </location>
</feature>
<comment type="function">
    <text evidence="1">Has antibacterial activity.</text>
</comment>
<comment type="subcellular location">
    <subcellularLocation>
        <location evidence="1">Secreted</location>
    </subcellularLocation>
</comment>
<comment type="similarity">
    <text evidence="3">Belongs to the beta-defensin family.</text>
</comment>
<comment type="caution">
    <text evidence="3">It is uncertain whether Met-1 or Met-5 is the initiator.</text>
</comment>
<accession>Q5IAA9</accession>
<accession>A4H214</accession>
<accession>Q30KL8</accession>
<gene>
    <name type="primary">DEFB107A</name>
    <name type="synonym">DEFB107</name>
    <name type="synonym">DEFB7</name>
</gene>
<reference key="1">
    <citation type="journal article" date="2005" name="Physiol. Genomics">
        <title>Cross-species analysis of the mammalian beta-defensin gene family: presence of syntenic gene clusters and preferential expression in the male reproductive tract.</title>
        <authorList>
            <person name="Patil A.A."/>
            <person name="Cai Y."/>
            <person name="Sang Y."/>
            <person name="Blecha F."/>
            <person name="Zhang G."/>
        </authorList>
    </citation>
    <scope>NUCLEOTIDE SEQUENCE [MRNA]</scope>
</reference>
<reference key="2">
    <citation type="submission" date="2006-11" db="EMBL/GenBank/DDBJ databases">
        <title>Evolution and sequence variation of human beta-defensin genes.</title>
        <authorList>
            <person name="Hollox E.J."/>
            <person name="Armour J.A.L."/>
        </authorList>
    </citation>
    <scope>NUCLEOTIDE SEQUENCE [GENOMIC DNA] OF 5-70</scope>
</reference>
<reference key="3">
    <citation type="journal article" date="2005" name="BMC Evol. Biol.">
        <title>The complexity of selection at the major primate beta-defensin locus.</title>
        <authorList>
            <person name="Semple C.A.M."/>
            <person name="Maxwell A."/>
            <person name="Gautier P."/>
            <person name="Kilanowski F.M."/>
            <person name="Eastwood H."/>
            <person name="Barran P.E."/>
            <person name="Dorin J.R."/>
        </authorList>
    </citation>
    <scope>NUCLEOTIDE SEQUENCE [GENOMIC DNA] OF 22-67</scope>
</reference>
<proteinExistence type="inferred from homology"/>
<keyword id="KW-0044">Antibiotic</keyword>
<keyword id="KW-0929">Antimicrobial</keyword>
<keyword id="KW-0211">Defensin</keyword>
<keyword id="KW-1015">Disulfide bond</keyword>
<keyword id="KW-1185">Reference proteome</keyword>
<keyword id="KW-0964">Secreted</keyword>
<keyword id="KW-0732">Signal</keyword>
<evidence type="ECO:0000250" key="1"/>
<evidence type="ECO:0000255" key="2"/>
<evidence type="ECO:0000305" key="3"/>
<organism>
    <name type="scientific">Pan troglodytes</name>
    <name type="common">Chimpanzee</name>
    <dbReference type="NCBI Taxonomy" id="9598"/>
    <lineage>
        <taxon>Eukaryota</taxon>
        <taxon>Metazoa</taxon>
        <taxon>Chordata</taxon>
        <taxon>Craniata</taxon>
        <taxon>Vertebrata</taxon>
        <taxon>Euteleostomi</taxon>
        <taxon>Mammalia</taxon>
        <taxon>Eutheria</taxon>
        <taxon>Euarchontoglires</taxon>
        <taxon>Primates</taxon>
        <taxon>Haplorrhini</taxon>
        <taxon>Catarrhini</taxon>
        <taxon>Hominidae</taxon>
        <taxon>Pan</taxon>
    </lineage>
</organism>